<comment type="function">
    <text evidence="1">Involved in the biosynthesis of the osmoprotectant glycine betaine. Catalyzes the oxidation of choline to betaine aldehyde and betaine aldehyde to glycine betaine at the same rate.</text>
</comment>
<comment type="catalytic activity">
    <reaction evidence="1">
        <text>choline + A = betaine aldehyde + AH2</text>
        <dbReference type="Rhea" id="RHEA:17433"/>
        <dbReference type="ChEBI" id="CHEBI:13193"/>
        <dbReference type="ChEBI" id="CHEBI:15354"/>
        <dbReference type="ChEBI" id="CHEBI:15710"/>
        <dbReference type="ChEBI" id="CHEBI:17499"/>
        <dbReference type="EC" id="1.1.99.1"/>
    </reaction>
</comment>
<comment type="catalytic activity">
    <reaction evidence="1">
        <text>betaine aldehyde + NAD(+) + H2O = glycine betaine + NADH + 2 H(+)</text>
        <dbReference type="Rhea" id="RHEA:15305"/>
        <dbReference type="ChEBI" id="CHEBI:15377"/>
        <dbReference type="ChEBI" id="CHEBI:15378"/>
        <dbReference type="ChEBI" id="CHEBI:15710"/>
        <dbReference type="ChEBI" id="CHEBI:17750"/>
        <dbReference type="ChEBI" id="CHEBI:57540"/>
        <dbReference type="ChEBI" id="CHEBI:57945"/>
        <dbReference type="EC" id="1.2.1.8"/>
    </reaction>
</comment>
<comment type="cofactor">
    <cofactor evidence="1">
        <name>FAD</name>
        <dbReference type="ChEBI" id="CHEBI:57692"/>
    </cofactor>
</comment>
<comment type="pathway">
    <text evidence="1">Amine and polyamine biosynthesis; betaine biosynthesis via choline pathway; betaine aldehyde from choline (cytochrome c reductase route): step 1/1.</text>
</comment>
<comment type="similarity">
    <text evidence="1">Belongs to the GMC oxidoreductase family.</text>
</comment>
<feature type="chain" id="PRO_1000133326" description="Oxygen-dependent choline dehydrogenase">
    <location>
        <begin position="1"/>
        <end position="562"/>
    </location>
</feature>
<feature type="active site" description="Proton acceptor" evidence="1">
    <location>
        <position position="473"/>
    </location>
</feature>
<feature type="binding site" evidence="1">
    <location>
        <begin position="4"/>
        <end position="33"/>
    </location>
    <ligand>
        <name>FAD</name>
        <dbReference type="ChEBI" id="CHEBI:57692"/>
    </ligand>
</feature>
<name>BETA_ECO45</name>
<sequence>MQFDYIIIGAGSAGNVLATRLTEDPNTTVLLLEAGGPDYRFDFRTQMPAALAFPLQGKRYNWAYETEPEPFMNNRRMECGRGKGLGGSSLINGMCYIRGNALDLDNWAQEPGLENWSYLDCLPYYRKAETRDVGENDYHGGDGPVSVTTSKPGVNPLFEAMIEAGVQAGYPRTDDLNGYQQEGFGPMDRTVTPHGRRASTARGYLDQAKSRPNLTIRTHAMTDHIFFDGKRAVGVEWLEGDSTIPTRAAANKEVLLCAGAIASPQILQRSGVGNAELLAEFDIPLVHELPGVGENLQDHLEMYLQYECKEPVSLYPALQWWNQPKIGAEWLFGGTGVGASNHFEAGGFIRSREEFAWPNIQYHFLPVAINYNGSNAVKEHGFQCHVGSMRSPSRGHVRIKSRDPHQHPAILFNYMSHEQDWQEFRDAIRITREIMHQPALDQYRGREISPGVECQTDEQLDEFVRNHAETAFHPCGTCKMGYDEMAVVDAEGRVHGLEGLRVVDASIMPQIITGNLNATTIMIGEKMADMIRGKDALPRSTARYFVANGMPVRAKKMSRDVN</sequence>
<accession>B7MCD0</accession>
<dbReference type="EC" id="1.1.99.1" evidence="1"/>
<dbReference type="EC" id="1.2.1.8" evidence="1"/>
<dbReference type="EMBL" id="CU928161">
    <property type="protein sequence ID" value="CAR01670.1"/>
    <property type="molecule type" value="Genomic_DNA"/>
</dbReference>
<dbReference type="RefSeq" id="WP_001159135.1">
    <property type="nucleotide sequence ID" value="NC_011742.1"/>
</dbReference>
<dbReference type="SMR" id="B7MCD0"/>
<dbReference type="KEGG" id="ecz:ECS88_0319"/>
<dbReference type="HOGENOM" id="CLU_002865_7_1_6"/>
<dbReference type="UniPathway" id="UPA00529">
    <property type="reaction ID" value="UER00385"/>
</dbReference>
<dbReference type="Proteomes" id="UP000000747">
    <property type="component" value="Chromosome"/>
</dbReference>
<dbReference type="GO" id="GO:0016020">
    <property type="term" value="C:membrane"/>
    <property type="evidence" value="ECO:0007669"/>
    <property type="project" value="TreeGrafter"/>
</dbReference>
<dbReference type="GO" id="GO:0008802">
    <property type="term" value="F:betaine-aldehyde dehydrogenase (NAD+) activity"/>
    <property type="evidence" value="ECO:0007669"/>
    <property type="project" value="UniProtKB-EC"/>
</dbReference>
<dbReference type="GO" id="GO:0008812">
    <property type="term" value="F:choline dehydrogenase activity"/>
    <property type="evidence" value="ECO:0007669"/>
    <property type="project" value="UniProtKB-UniRule"/>
</dbReference>
<dbReference type="GO" id="GO:0050660">
    <property type="term" value="F:flavin adenine dinucleotide binding"/>
    <property type="evidence" value="ECO:0007669"/>
    <property type="project" value="InterPro"/>
</dbReference>
<dbReference type="GO" id="GO:0019285">
    <property type="term" value="P:glycine betaine biosynthetic process from choline"/>
    <property type="evidence" value="ECO:0007669"/>
    <property type="project" value="UniProtKB-UniRule"/>
</dbReference>
<dbReference type="Gene3D" id="3.50.50.60">
    <property type="entry name" value="FAD/NAD(P)-binding domain"/>
    <property type="match status" value="1"/>
</dbReference>
<dbReference type="Gene3D" id="3.30.560.10">
    <property type="entry name" value="Glucose Oxidase, domain 3"/>
    <property type="match status" value="1"/>
</dbReference>
<dbReference type="HAMAP" id="MF_00750">
    <property type="entry name" value="Choline_dehydrogen"/>
    <property type="match status" value="1"/>
</dbReference>
<dbReference type="InterPro" id="IPR011533">
    <property type="entry name" value="BetA"/>
</dbReference>
<dbReference type="InterPro" id="IPR036188">
    <property type="entry name" value="FAD/NAD-bd_sf"/>
</dbReference>
<dbReference type="InterPro" id="IPR012132">
    <property type="entry name" value="GMC_OxRdtase"/>
</dbReference>
<dbReference type="InterPro" id="IPR000172">
    <property type="entry name" value="GMC_OxRdtase_N"/>
</dbReference>
<dbReference type="InterPro" id="IPR007867">
    <property type="entry name" value="GMC_OxRtase_C"/>
</dbReference>
<dbReference type="NCBIfam" id="TIGR01810">
    <property type="entry name" value="betA"/>
    <property type="match status" value="1"/>
</dbReference>
<dbReference type="NCBIfam" id="NF002550">
    <property type="entry name" value="PRK02106.1"/>
    <property type="match status" value="1"/>
</dbReference>
<dbReference type="PANTHER" id="PTHR11552:SF147">
    <property type="entry name" value="CHOLINE DEHYDROGENASE, MITOCHONDRIAL"/>
    <property type="match status" value="1"/>
</dbReference>
<dbReference type="PANTHER" id="PTHR11552">
    <property type="entry name" value="GLUCOSE-METHANOL-CHOLINE GMC OXIDOREDUCTASE"/>
    <property type="match status" value="1"/>
</dbReference>
<dbReference type="Pfam" id="PF05199">
    <property type="entry name" value="GMC_oxred_C"/>
    <property type="match status" value="1"/>
</dbReference>
<dbReference type="Pfam" id="PF00732">
    <property type="entry name" value="GMC_oxred_N"/>
    <property type="match status" value="1"/>
</dbReference>
<dbReference type="PIRSF" id="PIRSF000137">
    <property type="entry name" value="Alcohol_oxidase"/>
    <property type="match status" value="1"/>
</dbReference>
<dbReference type="SUPFAM" id="SSF54373">
    <property type="entry name" value="FAD-linked reductases, C-terminal domain"/>
    <property type="match status" value="1"/>
</dbReference>
<dbReference type="SUPFAM" id="SSF51905">
    <property type="entry name" value="FAD/NAD(P)-binding domain"/>
    <property type="match status" value="1"/>
</dbReference>
<dbReference type="PROSITE" id="PS00623">
    <property type="entry name" value="GMC_OXRED_1"/>
    <property type="match status" value="1"/>
</dbReference>
<dbReference type="PROSITE" id="PS00624">
    <property type="entry name" value="GMC_OXRED_2"/>
    <property type="match status" value="1"/>
</dbReference>
<gene>
    <name evidence="1" type="primary">betA</name>
    <name type="ordered locus">ECS88_0319</name>
</gene>
<evidence type="ECO:0000255" key="1">
    <source>
        <dbReference type="HAMAP-Rule" id="MF_00750"/>
    </source>
</evidence>
<proteinExistence type="inferred from homology"/>
<organism>
    <name type="scientific">Escherichia coli O45:K1 (strain S88 / ExPEC)</name>
    <dbReference type="NCBI Taxonomy" id="585035"/>
    <lineage>
        <taxon>Bacteria</taxon>
        <taxon>Pseudomonadati</taxon>
        <taxon>Pseudomonadota</taxon>
        <taxon>Gammaproteobacteria</taxon>
        <taxon>Enterobacterales</taxon>
        <taxon>Enterobacteriaceae</taxon>
        <taxon>Escherichia</taxon>
    </lineage>
</organism>
<reference key="1">
    <citation type="journal article" date="2009" name="PLoS Genet.">
        <title>Organised genome dynamics in the Escherichia coli species results in highly diverse adaptive paths.</title>
        <authorList>
            <person name="Touchon M."/>
            <person name="Hoede C."/>
            <person name="Tenaillon O."/>
            <person name="Barbe V."/>
            <person name="Baeriswyl S."/>
            <person name="Bidet P."/>
            <person name="Bingen E."/>
            <person name="Bonacorsi S."/>
            <person name="Bouchier C."/>
            <person name="Bouvet O."/>
            <person name="Calteau A."/>
            <person name="Chiapello H."/>
            <person name="Clermont O."/>
            <person name="Cruveiller S."/>
            <person name="Danchin A."/>
            <person name="Diard M."/>
            <person name="Dossat C."/>
            <person name="Karoui M.E."/>
            <person name="Frapy E."/>
            <person name="Garry L."/>
            <person name="Ghigo J.M."/>
            <person name="Gilles A.M."/>
            <person name="Johnson J."/>
            <person name="Le Bouguenec C."/>
            <person name="Lescat M."/>
            <person name="Mangenot S."/>
            <person name="Martinez-Jehanne V."/>
            <person name="Matic I."/>
            <person name="Nassif X."/>
            <person name="Oztas S."/>
            <person name="Petit M.A."/>
            <person name="Pichon C."/>
            <person name="Rouy Z."/>
            <person name="Ruf C.S."/>
            <person name="Schneider D."/>
            <person name="Tourret J."/>
            <person name="Vacherie B."/>
            <person name="Vallenet D."/>
            <person name="Medigue C."/>
            <person name="Rocha E.P.C."/>
            <person name="Denamur E."/>
        </authorList>
    </citation>
    <scope>NUCLEOTIDE SEQUENCE [LARGE SCALE GENOMIC DNA]</scope>
    <source>
        <strain>S88 / ExPEC</strain>
    </source>
</reference>
<protein>
    <recommendedName>
        <fullName evidence="1">Oxygen-dependent choline dehydrogenase</fullName>
        <shortName evidence="1">CDH</shortName>
        <shortName evidence="1">CHD</shortName>
        <ecNumber evidence="1">1.1.99.1</ecNumber>
    </recommendedName>
    <alternativeName>
        <fullName evidence="1">Betaine aldehyde dehydrogenase</fullName>
        <shortName evidence="1">BADH</shortName>
        <ecNumber evidence="1">1.2.1.8</ecNumber>
    </alternativeName>
</protein>
<keyword id="KW-0274">FAD</keyword>
<keyword id="KW-0285">Flavoprotein</keyword>
<keyword id="KW-0520">NAD</keyword>
<keyword id="KW-0560">Oxidoreductase</keyword>
<keyword id="KW-1185">Reference proteome</keyword>